<dbReference type="EMBL" id="EU925986">
    <property type="protein sequence ID" value="ACI41318.1"/>
    <property type="molecule type" value="mRNA"/>
</dbReference>
<dbReference type="EMBL" id="FM863990">
    <property type="protein sequence ID" value="CAS03588.1"/>
    <property type="molecule type" value="mRNA"/>
</dbReference>
<dbReference type="SMR" id="B6DCQ2"/>
<dbReference type="ArachnoServer" id="AS000935">
    <property type="toxin name" value="U3-lycotoxin-Ls1v"/>
</dbReference>
<dbReference type="GO" id="GO:0005576">
    <property type="term" value="C:extracellular region"/>
    <property type="evidence" value="ECO:0007669"/>
    <property type="project" value="UniProtKB-SubCell"/>
</dbReference>
<dbReference type="GO" id="GO:0090729">
    <property type="term" value="F:toxin activity"/>
    <property type="evidence" value="ECO:0007669"/>
    <property type="project" value="UniProtKB-KW"/>
</dbReference>
<dbReference type="InterPro" id="IPR019553">
    <property type="entry name" value="Spider_toxin_CSTX_knottin"/>
</dbReference>
<dbReference type="InterPro" id="IPR011142">
    <property type="entry name" value="Spider_toxin_CSTX_Knottin_CS"/>
</dbReference>
<dbReference type="Pfam" id="PF10530">
    <property type="entry name" value="Toxin_35"/>
    <property type="match status" value="1"/>
</dbReference>
<dbReference type="PROSITE" id="PS60029">
    <property type="entry name" value="SPIDER_CSTX"/>
    <property type="match status" value="1"/>
</dbReference>
<name>TX307_LYCSI</name>
<organism>
    <name type="scientific">Lycosa singoriensis</name>
    <name type="common">Wolf spider</name>
    <name type="synonym">Aranea singoriensis</name>
    <dbReference type="NCBI Taxonomy" id="434756"/>
    <lineage>
        <taxon>Eukaryota</taxon>
        <taxon>Metazoa</taxon>
        <taxon>Ecdysozoa</taxon>
        <taxon>Arthropoda</taxon>
        <taxon>Chelicerata</taxon>
        <taxon>Arachnida</taxon>
        <taxon>Araneae</taxon>
        <taxon>Araneomorphae</taxon>
        <taxon>Entelegynae</taxon>
        <taxon>Lycosoidea</taxon>
        <taxon>Lycosidae</taxon>
        <taxon>Lycosa</taxon>
    </lineage>
</organism>
<feature type="signal peptide" evidence="2">
    <location>
        <begin position="1"/>
        <end position="20"/>
    </location>
</feature>
<feature type="propeptide" id="PRO_0000401619" evidence="1">
    <location>
        <begin position="21"/>
        <end position="44"/>
    </location>
</feature>
<feature type="chain" id="PRO_0000401620" description="U3-lycotoxin-Ls1v">
    <location>
        <begin position="45"/>
        <end position="115"/>
    </location>
</feature>
<feature type="disulfide bond" evidence="1">
    <location>
        <begin position="48"/>
        <end position="63"/>
    </location>
</feature>
<feature type="disulfide bond" evidence="1">
    <location>
        <begin position="55"/>
        <end position="72"/>
    </location>
</feature>
<feature type="disulfide bond" evidence="1">
    <location>
        <begin position="62"/>
        <end position="87"/>
    </location>
</feature>
<feature type="disulfide bond" evidence="1">
    <location>
        <begin position="74"/>
        <end position="85"/>
    </location>
</feature>
<proteinExistence type="evidence at transcript level"/>
<keyword id="KW-1015">Disulfide bond</keyword>
<keyword id="KW-0960">Knottin</keyword>
<keyword id="KW-0964">Secreted</keyword>
<keyword id="KW-0732">Signal</keyword>
<keyword id="KW-0800">Toxin</keyword>
<reference key="1">
    <citation type="journal article" date="2010" name="Zoology">
        <title>Transcriptome analysis of the venom glands of the Chinese wolf spider Lycosa singoriensis.</title>
        <authorList>
            <person name="Zhang Y."/>
            <person name="Chen J."/>
            <person name="Tang X."/>
            <person name="Wang F."/>
            <person name="Jiang L."/>
            <person name="Xiong X."/>
            <person name="Wang M."/>
            <person name="Rong M."/>
            <person name="Liu Z."/>
            <person name="Liang S."/>
        </authorList>
    </citation>
    <scope>NUCLEOTIDE SEQUENCE [LARGE SCALE MRNA]</scope>
    <source>
        <tissue>Venom gland</tissue>
    </source>
</reference>
<comment type="subcellular location">
    <subcellularLocation>
        <location evidence="1">Secreted</location>
    </subcellularLocation>
</comment>
<comment type="tissue specificity">
    <text>Expressed by the venom gland.</text>
</comment>
<comment type="domain">
    <text evidence="1">The presence of a 'disulfide through disulfide knot' structurally defines this protein as a knottin.</text>
</comment>
<comment type="similarity">
    <text evidence="3">Belongs to the neurotoxin 19 (CSTX) family. 01 subfamily.</text>
</comment>
<evidence type="ECO:0000250" key="1"/>
<evidence type="ECO:0000255" key="2"/>
<evidence type="ECO:0000305" key="3"/>
<accession>B6DCQ2</accession>
<protein>
    <recommendedName>
        <fullName>U3-lycotoxin-Ls1v</fullName>
    </recommendedName>
    <alternativeName>
        <fullName>Toxin-like structure LSTX-B7</fullName>
    </alternativeName>
</protein>
<sequence>MKFVLLFGVLLVTLFSHSSAEMLDDFDQADEDELLSLIEKEEARAEECTPRFYDCSHDRHSCCRSELFKDVCTCFYPEGGDNEVCTCQQPKHLKYMEKAADKAKKFGGKIKKWFG</sequence>